<feature type="chain" id="PRO_0000250059" description="Anhydro-N-acetylmuramic acid kinase">
    <location>
        <begin position="1"/>
        <end position="369"/>
    </location>
</feature>
<feature type="binding site" evidence="1">
    <location>
        <begin position="12"/>
        <end position="19"/>
    </location>
    <ligand>
        <name>ATP</name>
        <dbReference type="ChEBI" id="CHEBI:30616"/>
    </ligand>
</feature>
<proteinExistence type="inferred from homology"/>
<keyword id="KW-0067">ATP-binding</keyword>
<keyword id="KW-0119">Carbohydrate metabolism</keyword>
<keyword id="KW-0418">Kinase</keyword>
<keyword id="KW-0547">Nucleotide-binding</keyword>
<keyword id="KW-1185">Reference proteome</keyword>
<keyword id="KW-0808">Transferase</keyword>
<name>ANMK_SHIDS</name>
<evidence type="ECO:0000255" key="1">
    <source>
        <dbReference type="HAMAP-Rule" id="MF_01270"/>
    </source>
</evidence>
<accession>Q32FD3</accession>
<sequence>MKSGRFIGVMSGTSLDGVDVVLATIDEHRVAQLASLSWPIPVSLKQAVLDICQGQQLTLSQFGQLDTQLGRLFADAVNALLKEQNLQARDIVAIGCHGQTVWHEPTGVAPHTLQIGDNNQIVARTGITVVGDFRRRDIALGGQGAPLVPAFHHALLAHPTERRMVLNIGGIANLSLLIPGQPVGGYDTGPGNMLMDAWIWRQAGKPYDKDAEWARAGKVILPLLQNMLSDPYFSQPAPKSTGREYFNYGWLERHLRHFPGVDPRDVQATLAELTAVTISEQVLLSGGCERLMVCGGGSRNPLLMARLAALLPGTEVTTTDAVGISGDDMEALAFAWLAWRTLAGLPGNLPSVTGASQETVLGAIFPANP</sequence>
<reference key="1">
    <citation type="journal article" date="2005" name="Nucleic Acids Res.">
        <title>Genome dynamics and diversity of Shigella species, the etiologic agents of bacillary dysentery.</title>
        <authorList>
            <person name="Yang F."/>
            <person name="Yang J."/>
            <person name="Zhang X."/>
            <person name="Chen L."/>
            <person name="Jiang Y."/>
            <person name="Yan Y."/>
            <person name="Tang X."/>
            <person name="Wang J."/>
            <person name="Xiong Z."/>
            <person name="Dong J."/>
            <person name="Xue Y."/>
            <person name="Zhu Y."/>
            <person name="Xu X."/>
            <person name="Sun L."/>
            <person name="Chen S."/>
            <person name="Nie H."/>
            <person name="Peng J."/>
            <person name="Xu J."/>
            <person name="Wang Y."/>
            <person name="Yuan Z."/>
            <person name="Wen Y."/>
            <person name="Yao Z."/>
            <person name="Shen Y."/>
            <person name="Qiang B."/>
            <person name="Hou Y."/>
            <person name="Yu J."/>
            <person name="Jin Q."/>
        </authorList>
    </citation>
    <scope>NUCLEOTIDE SEQUENCE [LARGE SCALE GENOMIC DNA]</scope>
    <source>
        <strain>Sd197</strain>
    </source>
</reference>
<organism>
    <name type="scientific">Shigella dysenteriae serotype 1 (strain Sd197)</name>
    <dbReference type="NCBI Taxonomy" id="300267"/>
    <lineage>
        <taxon>Bacteria</taxon>
        <taxon>Pseudomonadati</taxon>
        <taxon>Pseudomonadota</taxon>
        <taxon>Gammaproteobacteria</taxon>
        <taxon>Enterobacterales</taxon>
        <taxon>Enterobacteriaceae</taxon>
        <taxon>Shigella</taxon>
    </lineage>
</organism>
<comment type="function">
    <text evidence="1">Catalyzes the specific phosphorylation of 1,6-anhydro-N-acetylmuramic acid (anhMurNAc) with the simultaneous cleavage of the 1,6-anhydro ring, generating MurNAc-6-P. Is required for the utilization of anhMurNAc either imported from the medium or derived from its own cell wall murein, and thus plays a role in cell wall recycling.</text>
</comment>
<comment type="catalytic activity">
    <reaction evidence="1">
        <text>1,6-anhydro-N-acetyl-beta-muramate + ATP + H2O = N-acetyl-D-muramate 6-phosphate + ADP + H(+)</text>
        <dbReference type="Rhea" id="RHEA:24952"/>
        <dbReference type="ChEBI" id="CHEBI:15377"/>
        <dbReference type="ChEBI" id="CHEBI:15378"/>
        <dbReference type="ChEBI" id="CHEBI:30616"/>
        <dbReference type="ChEBI" id="CHEBI:58690"/>
        <dbReference type="ChEBI" id="CHEBI:58722"/>
        <dbReference type="ChEBI" id="CHEBI:456216"/>
        <dbReference type="EC" id="2.7.1.170"/>
    </reaction>
</comment>
<comment type="pathway">
    <text evidence="1">Amino-sugar metabolism; 1,6-anhydro-N-acetylmuramate degradation.</text>
</comment>
<comment type="pathway">
    <text evidence="1">Cell wall biogenesis; peptidoglycan recycling.</text>
</comment>
<comment type="similarity">
    <text evidence="1">Belongs to the anhydro-N-acetylmuramic acid kinase family.</text>
</comment>
<gene>
    <name evidence="1" type="primary">anmK</name>
    <name type="ordered locus">SDY_1863</name>
</gene>
<protein>
    <recommendedName>
        <fullName evidence="1">Anhydro-N-acetylmuramic acid kinase</fullName>
        <ecNumber evidence="1">2.7.1.170</ecNumber>
    </recommendedName>
    <alternativeName>
        <fullName evidence="1">AnhMurNAc kinase</fullName>
    </alternativeName>
</protein>
<dbReference type="EC" id="2.7.1.170" evidence="1"/>
<dbReference type="EMBL" id="CP000034">
    <property type="protein sequence ID" value="ABB61972.1"/>
    <property type="molecule type" value="Genomic_DNA"/>
</dbReference>
<dbReference type="RefSeq" id="WP_000835077.1">
    <property type="nucleotide sequence ID" value="NC_007606.1"/>
</dbReference>
<dbReference type="RefSeq" id="YP_403463.1">
    <property type="nucleotide sequence ID" value="NC_007606.1"/>
</dbReference>
<dbReference type="SMR" id="Q32FD3"/>
<dbReference type="STRING" id="300267.SDY_1863"/>
<dbReference type="EnsemblBacteria" id="ABB61972">
    <property type="protein sequence ID" value="ABB61972"/>
    <property type="gene ID" value="SDY_1863"/>
</dbReference>
<dbReference type="GeneID" id="93775794"/>
<dbReference type="KEGG" id="sdy:SDY_1863"/>
<dbReference type="PATRIC" id="fig|300267.13.peg.2242"/>
<dbReference type="HOGENOM" id="CLU_038782_0_0_6"/>
<dbReference type="UniPathway" id="UPA00343"/>
<dbReference type="UniPathway" id="UPA00544"/>
<dbReference type="Proteomes" id="UP000002716">
    <property type="component" value="Chromosome"/>
</dbReference>
<dbReference type="GO" id="GO:0005524">
    <property type="term" value="F:ATP binding"/>
    <property type="evidence" value="ECO:0007669"/>
    <property type="project" value="UniProtKB-UniRule"/>
</dbReference>
<dbReference type="GO" id="GO:0016301">
    <property type="term" value="F:kinase activity"/>
    <property type="evidence" value="ECO:0007669"/>
    <property type="project" value="UniProtKB-KW"/>
</dbReference>
<dbReference type="GO" id="GO:0016773">
    <property type="term" value="F:phosphotransferase activity, alcohol group as acceptor"/>
    <property type="evidence" value="ECO:0007669"/>
    <property type="project" value="UniProtKB-UniRule"/>
</dbReference>
<dbReference type="GO" id="GO:0097175">
    <property type="term" value="P:1,6-anhydro-N-acetyl-beta-muramic acid catabolic process"/>
    <property type="evidence" value="ECO:0007669"/>
    <property type="project" value="UniProtKB-UniRule"/>
</dbReference>
<dbReference type="GO" id="GO:0006040">
    <property type="term" value="P:amino sugar metabolic process"/>
    <property type="evidence" value="ECO:0007669"/>
    <property type="project" value="InterPro"/>
</dbReference>
<dbReference type="GO" id="GO:0009254">
    <property type="term" value="P:peptidoglycan turnover"/>
    <property type="evidence" value="ECO:0007669"/>
    <property type="project" value="UniProtKB-UniRule"/>
</dbReference>
<dbReference type="CDD" id="cd24050">
    <property type="entry name" value="ASKHA_NBD_ANMK"/>
    <property type="match status" value="1"/>
</dbReference>
<dbReference type="FunFam" id="3.30.420.40:FF:000090">
    <property type="entry name" value="Anhydro-N-acetylmuramic acid kinase"/>
    <property type="match status" value="1"/>
</dbReference>
<dbReference type="Gene3D" id="3.30.420.40">
    <property type="match status" value="2"/>
</dbReference>
<dbReference type="HAMAP" id="MF_01270">
    <property type="entry name" value="AnhMurNAc_kinase"/>
    <property type="match status" value="1"/>
</dbReference>
<dbReference type="InterPro" id="IPR005338">
    <property type="entry name" value="Anhydro_N_Ac-Mur_kinase"/>
</dbReference>
<dbReference type="InterPro" id="IPR043129">
    <property type="entry name" value="ATPase_NBD"/>
</dbReference>
<dbReference type="NCBIfam" id="NF007138">
    <property type="entry name" value="PRK09585.1-1"/>
    <property type="match status" value="1"/>
</dbReference>
<dbReference type="NCBIfam" id="NF007139">
    <property type="entry name" value="PRK09585.1-3"/>
    <property type="match status" value="1"/>
</dbReference>
<dbReference type="NCBIfam" id="NF007148">
    <property type="entry name" value="PRK09585.3-2"/>
    <property type="match status" value="1"/>
</dbReference>
<dbReference type="PANTHER" id="PTHR30605">
    <property type="entry name" value="ANHYDRO-N-ACETYLMURAMIC ACID KINASE"/>
    <property type="match status" value="1"/>
</dbReference>
<dbReference type="PANTHER" id="PTHR30605:SF0">
    <property type="entry name" value="ANHYDRO-N-ACETYLMURAMIC ACID KINASE"/>
    <property type="match status" value="1"/>
</dbReference>
<dbReference type="Pfam" id="PF03702">
    <property type="entry name" value="AnmK"/>
    <property type="match status" value="1"/>
</dbReference>
<dbReference type="SUPFAM" id="SSF53067">
    <property type="entry name" value="Actin-like ATPase domain"/>
    <property type="match status" value="1"/>
</dbReference>